<keyword id="KW-0687">Ribonucleoprotein</keyword>
<keyword id="KW-0689">Ribosomal protein</keyword>
<name>RL13_PSEF5</name>
<accession>Q4K6H2</accession>
<gene>
    <name evidence="1" type="primary">rplM</name>
    <name type="ordered locus">PFL_5082</name>
</gene>
<comment type="function">
    <text evidence="1">This protein is one of the early assembly proteins of the 50S ribosomal subunit, although it is not seen to bind rRNA by itself. It is important during the early stages of 50S assembly.</text>
</comment>
<comment type="subunit">
    <text evidence="1">Part of the 50S ribosomal subunit.</text>
</comment>
<comment type="similarity">
    <text evidence="1">Belongs to the universal ribosomal protein uL13 family.</text>
</comment>
<evidence type="ECO:0000255" key="1">
    <source>
        <dbReference type="HAMAP-Rule" id="MF_01366"/>
    </source>
</evidence>
<evidence type="ECO:0000305" key="2"/>
<organism>
    <name type="scientific">Pseudomonas fluorescens (strain ATCC BAA-477 / NRRL B-23932 / Pf-5)</name>
    <dbReference type="NCBI Taxonomy" id="220664"/>
    <lineage>
        <taxon>Bacteria</taxon>
        <taxon>Pseudomonadati</taxon>
        <taxon>Pseudomonadota</taxon>
        <taxon>Gammaproteobacteria</taxon>
        <taxon>Pseudomonadales</taxon>
        <taxon>Pseudomonadaceae</taxon>
        <taxon>Pseudomonas</taxon>
    </lineage>
</organism>
<reference key="1">
    <citation type="journal article" date="2005" name="Nat. Biotechnol.">
        <title>Complete genome sequence of the plant commensal Pseudomonas fluorescens Pf-5.</title>
        <authorList>
            <person name="Paulsen I.T."/>
            <person name="Press C.M."/>
            <person name="Ravel J."/>
            <person name="Kobayashi D.Y."/>
            <person name="Myers G.S.A."/>
            <person name="Mavrodi D.V."/>
            <person name="DeBoy R.T."/>
            <person name="Seshadri R."/>
            <person name="Ren Q."/>
            <person name="Madupu R."/>
            <person name="Dodson R.J."/>
            <person name="Durkin A.S."/>
            <person name="Brinkac L.M."/>
            <person name="Daugherty S.C."/>
            <person name="Sullivan S.A."/>
            <person name="Rosovitz M.J."/>
            <person name="Gwinn M.L."/>
            <person name="Zhou L."/>
            <person name="Schneider D.J."/>
            <person name="Cartinhour S.W."/>
            <person name="Nelson W.C."/>
            <person name="Weidman J."/>
            <person name="Watkins K."/>
            <person name="Tran K."/>
            <person name="Khouri H."/>
            <person name="Pierson E.A."/>
            <person name="Pierson L.S. III"/>
            <person name="Thomashow L.S."/>
            <person name="Loper J.E."/>
        </authorList>
    </citation>
    <scope>NUCLEOTIDE SEQUENCE [LARGE SCALE GENOMIC DNA]</scope>
    <source>
        <strain>ATCC BAA-477 / NRRL B-23932 / Pf-5</strain>
    </source>
</reference>
<protein>
    <recommendedName>
        <fullName evidence="1">Large ribosomal subunit protein uL13</fullName>
    </recommendedName>
    <alternativeName>
        <fullName evidence="2">50S ribosomal protein L13</fullName>
    </alternativeName>
</protein>
<sequence length="142" mass="15820">MKTFTAKPETVKRDWFVVDAAGQTLGRLATEIASRLRGKHKPEYTPHVDTGDYIVVINAEQVRVTGAKTTDKMYYSHSGFPGGIKSINFEKLIAKAPERVIETAVKGMLPKNPLGRDMYRKLKVYAGAAHPHTAQQPQELKI</sequence>
<proteinExistence type="inferred from homology"/>
<feature type="chain" id="PRO_0000261770" description="Large ribosomal subunit protein uL13">
    <location>
        <begin position="1"/>
        <end position="142"/>
    </location>
</feature>
<dbReference type="EMBL" id="CP000076">
    <property type="protein sequence ID" value="AAY94310.1"/>
    <property type="molecule type" value="Genomic_DNA"/>
</dbReference>
<dbReference type="RefSeq" id="WP_007928449.1">
    <property type="nucleotide sequence ID" value="NC_004129.6"/>
</dbReference>
<dbReference type="SMR" id="Q4K6H2"/>
<dbReference type="STRING" id="220664.PFL_5082"/>
<dbReference type="GeneID" id="61652655"/>
<dbReference type="KEGG" id="pfl:PFL_5082"/>
<dbReference type="eggNOG" id="COG0102">
    <property type="taxonomic scope" value="Bacteria"/>
</dbReference>
<dbReference type="HOGENOM" id="CLU_082184_2_2_6"/>
<dbReference type="Proteomes" id="UP000008540">
    <property type="component" value="Chromosome"/>
</dbReference>
<dbReference type="GO" id="GO:0022625">
    <property type="term" value="C:cytosolic large ribosomal subunit"/>
    <property type="evidence" value="ECO:0007669"/>
    <property type="project" value="TreeGrafter"/>
</dbReference>
<dbReference type="GO" id="GO:0003729">
    <property type="term" value="F:mRNA binding"/>
    <property type="evidence" value="ECO:0007669"/>
    <property type="project" value="TreeGrafter"/>
</dbReference>
<dbReference type="GO" id="GO:0003735">
    <property type="term" value="F:structural constituent of ribosome"/>
    <property type="evidence" value="ECO:0007669"/>
    <property type="project" value="InterPro"/>
</dbReference>
<dbReference type="GO" id="GO:0017148">
    <property type="term" value="P:negative regulation of translation"/>
    <property type="evidence" value="ECO:0007669"/>
    <property type="project" value="TreeGrafter"/>
</dbReference>
<dbReference type="GO" id="GO:0006412">
    <property type="term" value="P:translation"/>
    <property type="evidence" value="ECO:0007669"/>
    <property type="project" value="UniProtKB-UniRule"/>
</dbReference>
<dbReference type="CDD" id="cd00392">
    <property type="entry name" value="Ribosomal_L13"/>
    <property type="match status" value="1"/>
</dbReference>
<dbReference type="FunFam" id="3.90.1180.10:FF:000001">
    <property type="entry name" value="50S ribosomal protein L13"/>
    <property type="match status" value="1"/>
</dbReference>
<dbReference type="Gene3D" id="3.90.1180.10">
    <property type="entry name" value="Ribosomal protein L13"/>
    <property type="match status" value="1"/>
</dbReference>
<dbReference type="HAMAP" id="MF_01366">
    <property type="entry name" value="Ribosomal_uL13"/>
    <property type="match status" value="1"/>
</dbReference>
<dbReference type="InterPro" id="IPR005822">
    <property type="entry name" value="Ribosomal_uL13"/>
</dbReference>
<dbReference type="InterPro" id="IPR005823">
    <property type="entry name" value="Ribosomal_uL13_bac-type"/>
</dbReference>
<dbReference type="InterPro" id="IPR023563">
    <property type="entry name" value="Ribosomal_uL13_CS"/>
</dbReference>
<dbReference type="InterPro" id="IPR036899">
    <property type="entry name" value="Ribosomal_uL13_sf"/>
</dbReference>
<dbReference type="NCBIfam" id="TIGR01066">
    <property type="entry name" value="rplM_bact"/>
    <property type="match status" value="1"/>
</dbReference>
<dbReference type="PANTHER" id="PTHR11545:SF2">
    <property type="entry name" value="LARGE RIBOSOMAL SUBUNIT PROTEIN UL13M"/>
    <property type="match status" value="1"/>
</dbReference>
<dbReference type="PANTHER" id="PTHR11545">
    <property type="entry name" value="RIBOSOMAL PROTEIN L13"/>
    <property type="match status" value="1"/>
</dbReference>
<dbReference type="Pfam" id="PF00572">
    <property type="entry name" value="Ribosomal_L13"/>
    <property type="match status" value="1"/>
</dbReference>
<dbReference type="PIRSF" id="PIRSF002181">
    <property type="entry name" value="Ribosomal_L13"/>
    <property type="match status" value="1"/>
</dbReference>
<dbReference type="SUPFAM" id="SSF52161">
    <property type="entry name" value="Ribosomal protein L13"/>
    <property type="match status" value="1"/>
</dbReference>
<dbReference type="PROSITE" id="PS00783">
    <property type="entry name" value="RIBOSOMAL_L13"/>
    <property type="match status" value="1"/>
</dbReference>